<comment type="catalytic activity">
    <reaction evidence="1">
        <text>L-histidinol phosphate + 2-oxoglutarate = 3-(imidazol-4-yl)-2-oxopropyl phosphate + L-glutamate</text>
        <dbReference type="Rhea" id="RHEA:23744"/>
        <dbReference type="ChEBI" id="CHEBI:16810"/>
        <dbReference type="ChEBI" id="CHEBI:29985"/>
        <dbReference type="ChEBI" id="CHEBI:57766"/>
        <dbReference type="ChEBI" id="CHEBI:57980"/>
        <dbReference type="EC" id="2.6.1.9"/>
    </reaction>
</comment>
<comment type="cofactor">
    <cofactor evidence="1">
        <name>pyridoxal 5'-phosphate</name>
        <dbReference type="ChEBI" id="CHEBI:597326"/>
    </cofactor>
</comment>
<comment type="pathway">
    <text evidence="1">Amino-acid biosynthesis; L-histidine biosynthesis; L-histidine from 5-phospho-alpha-D-ribose 1-diphosphate: step 7/9.</text>
</comment>
<comment type="subunit">
    <text evidence="1">Homodimer.</text>
</comment>
<comment type="similarity">
    <text evidence="1">Belongs to the class-II pyridoxal-phosphate-dependent aminotransferase family. Histidinol-phosphate aminotransferase subfamily.</text>
</comment>
<gene>
    <name evidence="1" type="primary">hisC2</name>
    <name type="ordered locus">Nmul_A2193</name>
</gene>
<feature type="chain" id="PRO_0000230218" description="Histidinol-phosphate aminotransferase 2">
    <location>
        <begin position="1"/>
        <end position="392"/>
    </location>
</feature>
<feature type="modified residue" description="N6-(pyridoxal phosphate)lysine" evidence="1">
    <location>
        <position position="228"/>
    </location>
</feature>
<protein>
    <recommendedName>
        <fullName evidence="1">Histidinol-phosphate aminotransferase 2</fullName>
        <ecNumber evidence="1">2.6.1.9</ecNumber>
    </recommendedName>
    <alternativeName>
        <fullName evidence="1">Imidazole acetol-phosphate transaminase 2</fullName>
    </alternativeName>
</protein>
<accession>Q2Y6Y6</accession>
<name>HIS82_NITMU</name>
<evidence type="ECO:0000255" key="1">
    <source>
        <dbReference type="HAMAP-Rule" id="MF_01023"/>
    </source>
</evidence>
<dbReference type="EC" id="2.6.1.9" evidence="1"/>
<dbReference type="EMBL" id="CP000103">
    <property type="protein sequence ID" value="ABB75485.1"/>
    <property type="molecule type" value="Genomic_DNA"/>
</dbReference>
<dbReference type="RefSeq" id="WP_011381492.1">
    <property type="nucleotide sequence ID" value="NC_007614.1"/>
</dbReference>
<dbReference type="SMR" id="Q2Y6Y6"/>
<dbReference type="STRING" id="323848.Nmul_A2193"/>
<dbReference type="DNASU" id="3786218"/>
<dbReference type="KEGG" id="nmu:Nmul_A2193"/>
<dbReference type="eggNOG" id="COG0079">
    <property type="taxonomic scope" value="Bacteria"/>
</dbReference>
<dbReference type="HOGENOM" id="CLU_017584_3_3_4"/>
<dbReference type="OrthoDB" id="9813612at2"/>
<dbReference type="UniPathway" id="UPA00031">
    <property type="reaction ID" value="UER00012"/>
</dbReference>
<dbReference type="Proteomes" id="UP000002718">
    <property type="component" value="Chromosome"/>
</dbReference>
<dbReference type="GO" id="GO:0004400">
    <property type="term" value="F:histidinol-phosphate transaminase activity"/>
    <property type="evidence" value="ECO:0007669"/>
    <property type="project" value="UniProtKB-UniRule"/>
</dbReference>
<dbReference type="GO" id="GO:0030170">
    <property type="term" value="F:pyridoxal phosphate binding"/>
    <property type="evidence" value="ECO:0007669"/>
    <property type="project" value="InterPro"/>
</dbReference>
<dbReference type="GO" id="GO:0000105">
    <property type="term" value="P:L-histidine biosynthetic process"/>
    <property type="evidence" value="ECO:0007669"/>
    <property type="project" value="UniProtKB-UniRule"/>
</dbReference>
<dbReference type="CDD" id="cd00609">
    <property type="entry name" value="AAT_like"/>
    <property type="match status" value="1"/>
</dbReference>
<dbReference type="Gene3D" id="3.90.1150.10">
    <property type="entry name" value="Aspartate Aminotransferase, domain 1"/>
    <property type="match status" value="1"/>
</dbReference>
<dbReference type="Gene3D" id="3.40.640.10">
    <property type="entry name" value="Type I PLP-dependent aspartate aminotransferase-like (Major domain)"/>
    <property type="match status" value="1"/>
</dbReference>
<dbReference type="HAMAP" id="MF_01023">
    <property type="entry name" value="HisC_aminotrans_2"/>
    <property type="match status" value="1"/>
</dbReference>
<dbReference type="InterPro" id="IPR001917">
    <property type="entry name" value="Aminotrans_II_pyridoxalP_BS"/>
</dbReference>
<dbReference type="InterPro" id="IPR004839">
    <property type="entry name" value="Aminotransferase_I/II_large"/>
</dbReference>
<dbReference type="InterPro" id="IPR005861">
    <property type="entry name" value="HisP_aminotrans"/>
</dbReference>
<dbReference type="InterPro" id="IPR050106">
    <property type="entry name" value="HistidinolP_aminotransfase"/>
</dbReference>
<dbReference type="InterPro" id="IPR015424">
    <property type="entry name" value="PyrdxlP-dep_Trfase"/>
</dbReference>
<dbReference type="InterPro" id="IPR015421">
    <property type="entry name" value="PyrdxlP-dep_Trfase_major"/>
</dbReference>
<dbReference type="InterPro" id="IPR015422">
    <property type="entry name" value="PyrdxlP-dep_Trfase_small"/>
</dbReference>
<dbReference type="NCBIfam" id="TIGR01141">
    <property type="entry name" value="hisC"/>
    <property type="match status" value="1"/>
</dbReference>
<dbReference type="PANTHER" id="PTHR43643:SF3">
    <property type="entry name" value="HISTIDINOL-PHOSPHATE AMINOTRANSFERASE"/>
    <property type="match status" value="1"/>
</dbReference>
<dbReference type="PANTHER" id="PTHR43643">
    <property type="entry name" value="HISTIDINOL-PHOSPHATE AMINOTRANSFERASE 2"/>
    <property type="match status" value="1"/>
</dbReference>
<dbReference type="Pfam" id="PF00155">
    <property type="entry name" value="Aminotran_1_2"/>
    <property type="match status" value="1"/>
</dbReference>
<dbReference type="SUPFAM" id="SSF53383">
    <property type="entry name" value="PLP-dependent transferases"/>
    <property type="match status" value="1"/>
</dbReference>
<dbReference type="PROSITE" id="PS00599">
    <property type="entry name" value="AA_TRANSFER_CLASS_2"/>
    <property type="match status" value="1"/>
</dbReference>
<organism>
    <name type="scientific">Nitrosospira multiformis (strain ATCC 25196 / NCIMB 11849 / C 71)</name>
    <dbReference type="NCBI Taxonomy" id="323848"/>
    <lineage>
        <taxon>Bacteria</taxon>
        <taxon>Pseudomonadati</taxon>
        <taxon>Pseudomonadota</taxon>
        <taxon>Betaproteobacteria</taxon>
        <taxon>Nitrosomonadales</taxon>
        <taxon>Nitrosomonadaceae</taxon>
        <taxon>Nitrosospira</taxon>
    </lineage>
</organism>
<sequence length="392" mass="42071">MNICDLAPAYIRAISPYQPGKPISELAREMGMDEQSIIKLASNENPLGTSPMALNAMSKALDEVSLYPDGSGFELKAALSERYGVTSDQIVLGNGSNDVLELAARVFLKPGASTVYSQHAFAVYPLVTKAVGGIGISVPARNYGHDLDAMLDAVAPETRVVFIANPNNPTGTLLPADDVLRFLERVSPDVLVVLDEAYNEYLPPALKGDSIAWLKQFPNLLITRTFSKAYGMAGVRVGFGLGHPDVAGLMNRVRQPFNVNNIGLAGAVAALQDEEFVKRSYALNQAGMLQIVTGLRQMGIEYIPSYGNFLSFRVPGNVKAINESLLKQGVIVRPISIYEMPEHLRVTVGLESENEKFLKSLAIALETTEGAAADTIPEMAVSFPKVASGGTA</sequence>
<reference key="1">
    <citation type="submission" date="2005-08" db="EMBL/GenBank/DDBJ databases">
        <title>Complete sequence of chromosome 1 of Nitrosospira multiformis ATCC 25196.</title>
        <authorList>
            <person name="Copeland A."/>
            <person name="Lucas S."/>
            <person name="Lapidus A."/>
            <person name="Barry K."/>
            <person name="Detter J.C."/>
            <person name="Glavina T."/>
            <person name="Hammon N."/>
            <person name="Israni S."/>
            <person name="Pitluck S."/>
            <person name="Chain P."/>
            <person name="Malfatti S."/>
            <person name="Shin M."/>
            <person name="Vergez L."/>
            <person name="Schmutz J."/>
            <person name="Larimer F."/>
            <person name="Land M."/>
            <person name="Hauser L."/>
            <person name="Kyrpides N."/>
            <person name="Lykidis A."/>
            <person name="Richardson P."/>
        </authorList>
    </citation>
    <scope>NUCLEOTIDE SEQUENCE [LARGE SCALE GENOMIC DNA]</scope>
    <source>
        <strain>ATCC 25196 / NCIMB 11849 / C 71</strain>
    </source>
</reference>
<proteinExistence type="inferred from homology"/>
<keyword id="KW-0028">Amino-acid biosynthesis</keyword>
<keyword id="KW-0032">Aminotransferase</keyword>
<keyword id="KW-0368">Histidine biosynthesis</keyword>
<keyword id="KW-0663">Pyridoxal phosphate</keyword>
<keyword id="KW-1185">Reference proteome</keyword>
<keyword id="KW-0808">Transferase</keyword>